<dbReference type="EC" id="4.3.3.6" evidence="1"/>
<dbReference type="EMBL" id="CP000688">
    <property type="protein sequence ID" value="ABQ16947.1"/>
    <property type="molecule type" value="Genomic_DNA"/>
</dbReference>
<dbReference type="SMR" id="A5FS82"/>
<dbReference type="KEGG" id="deb:DehaBAV1_0362"/>
<dbReference type="PATRIC" id="fig|216389.18.peg.401"/>
<dbReference type="HOGENOM" id="CLU_055352_1_0_0"/>
<dbReference type="UniPathway" id="UPA00245"/>
<dbReference type="GO" id="GO:0036381">
    <property type="term" value="F:pyridoxal 5'-phosphate synthase (glutamine hydrolysing) activity"/>
    <property type="evidence" value="ECO:0007669"/>
    <property type="project" value="UniProtKB-UniRule"/>
</dbReference>
<dbReference type="GO" id="GO:0006520">
    <property type="term" value="P:amino acid metabolic process"/>
    <property type="evidence" value="ECO:0007669"/>
    <property type="project" value="TreeGrafter"/>
</dbReference>
<dbReference type="GO" id="GO:0042823">
    <property type="term" value="P:pyridoxal phosphate biosynthetic process"/>
    <property type="evidence" value="ECO:0007669"/>
    <property type="project" value="UniProtKB-UniRule"/>
</dbReference>
<dbReference type="GO" id="GO:0008615">
    <property type="term" value="P:pyridoxine biosynthetic process"/>
    <property type="evidence" value="ECO:0007669"/>
    <property type="project" value="TreeGrafter"/>
</dbReference>
<dbReference type="CDD" id="cd04727">
    <property type="entry name" value="pdxS"/>
    <property type="match status" value="1"/>
</dbReference>
<dbReference type="FunFam" id="3.20.20.70:FF:000001">
    <property type="entry name" value="Pyridoxine biosynthesis protein PDX1"/>
    <property type="match status" value="1"/>
</dbReference>
<dbReference type="Gene3D" id="3.20.20.70">
    <property type="entry name" value="Aldolase class I"/>
    <property type="match status" value="1"/>
</dbReference>
<dbReference type="HAMAP" id="MF_01824">
    <property type="entry name" value="PdxS"/>
    <property type="match status" value="1"/>
</dbReference>
<dbReference type="InterPro" id="IPR013785">
    <property type="entry name" value="Aldolase_TIM"/>
</dbReference>
<dbReference type="InterPro" id="IPR001852">
    <property type="entry name" value="PdxS/SNZ"/>
</dbReference>
<dbReference type="InterPro" id="IPR033755">
    <property type="entry name" value="PdxS/SNZ_N"/>
</dbReference>
<dbReference type="InterPro" id="IPR011060">
    <property type="entry name" value="RibuloseP-bd_barrel"/>
</dbReference>
<dbReference type="NCBIfam" id="NF003215">
    <property type="entry name" value="PRK04180.1"/>
    <property type="match status" value="1"/>
</dbReference>
<dbReference type="NCBIfam" id="TIGR00343">
    <property type="entry name" value="pyridoxal 5'-phosphate synthase lyase subunit PdxS"/>
    <property type="match status" value="1"/>
</dbReference>
<dbReference type="PANTHER" id="PTHR31829">
    <property type="entry name" value="PYRIDOXAL 5'-PHOSPHATE SYNTHASE SUBUNIT SNZ1-RELATED"/>
    <property type="match status" value="1"/>
</dbReference>
<dbReference type="PANTHER" id="PTHR31829:SF0">
    <property type="entry name" value="PYRIDOXAL 5'-PHOSPHATE SYNTHASE SUBUNIT SNZ1-RELATED"/>
    <property type="match status" value="1"/>
</dbReference>
<dbReference type="Pfam" id="PF01680">
    <property type="entry name" value="SOR_SNZ"/>
    <property type="match status" value="1"/>
</dbReference>
<dbReference type="PIRSF" id="PIRSF029271">
    <property type="entry name" value="Pdx1"/>
    <property type="match status" value="1"/>
</dbReference>
<dbReference type="SUPFAM" id="SSF51366">
    <property type="entry name" value="Ribulose-phoshate binding barrel"/>
    <property type="match status" value="1"/>
</dbReference>
<dbReference type="PROSITE" id="PS01235">
    <property type="entry name" value="PDXS_SNZ_1"/>
    <property type="match status" value="1"/>
</dbReference>
<dbReference type="PROSITE" id="PS51129">
    <property type="entry name" value="PDXS_SNZ_2"/>
    <property type="match status" value="1"/>
</dbReference>
<comment type="function">
    <text evidence="1">Catalyzes the formation of pyridoxal 5'-phosphate from ribose 5-phosphate (RBP), glyceraldehyde 3-phosphate (G3P) and ammonia. The ammonia is provided by the PdxT subunit. Can also use ribulose 5-phosphate and dihydroxyacetone phosphate as substrates, resulting from enzyme-catalyzed isomerization of RBP and G3P, respectively.</text>
</comment>
<comment type="catalytic activity">
    <reaction evidence="1">
        <text>aldehydo-D-ribose 5-phosphate + D-glyceraldehyde 3-phosphate + L-glutamine = pyridoxal 5'-phosphate + L-glutamate + phosphate + 3 H2O + H(+)</text>
        <dbReference type="Rhea" id="RHEA:31507"/>
        <dbReference type="ChEBI" id="CHEBI:15377"/>
        <dbReference type="ChEBI" id="CHEBI:15378"/>
        <dbReference type="ChEBI" id="CHEBI:29985"/>
        <dbReference type="ChEBI" id="CHEBI:43474"/>
        <dbReference type="ChEBI" id="CHEBI:58273"/>
        <dbReference type="ChEBI" id="CHEBI:58359"/>
        <dbReference type="ChEBI" id="CHEBI:59776"/>
        <dbReference type="ChEBI" id="CHEBI:597326"/>
        <dbReference type="EC" id="4.3.3.6"/>
    </reaction>
</comment>
<comment type="pathway">
    <text evidence="1">Cofactor biosynthesis; pyridoxal 5'-phosphate biosynthesis.</text>
</comment>
<comment type="subunit">
    <text evidence="1">In the presence of PdxT, forms a dodecamer of heterodimers.</text>
</comment>
<comment type="similarity">
    <text evidence="1">Belongs to the PdxS/SNZ family.</text>
</comment>
<accession>A5FS82</accession>
<name>PDXS_DEHMB</name>
<proteinExistence type="inferred from homology"/>
<evidence type="ECO:0000255" key="1">
    <source>
        <dbReference type="HAMAP-Rule" id="MF_01824"/>
    </source>
</evidence>
<feature type="chain" id="PRO_1000088406" description="Pyridoxal 5'-phosphate synthase subunit PdxS">
    <location>
        <begin position="1"/>
        <end position="293"/>
    </location>
</feature>
<feature type="active site" description="Schiff-base intermediate with D-ribose 5-phosphate" evidence="1">
    <location>
        <position position="80"/>
    </location>
</feature>
<feature type="binding site" evidence="1">
    <location>
        <position position="23"/>
    </location>
    <ligand>
        <name>D-ribose 5-phosphate</name>
        <dbReference type="ChEBI" id="CHEBI:78346"/>
    </ligand>
</feature>
<feature type="binding site" evidence="1">
    <location>
        <position position="152"/>
    </location>
    <ligand>
        <name>D-ribose 5-phosphate</name>
        <dbReference type="ChEBI" id="CHEBI:78346"/>
    </ligand>
</feature>
<feature type="binding site" evidence="1">
    <location>
        <position position="164"/>
    </location>
    <ligand>
        <name>D-glyceraldehyde 3-phosphate</name>
        <dbReference type="ChEBI" id="CHEBI:59776"/>
    </ligand>
</feature>
<feature type="binding site" evidence="1">
    <location>
        <position position="213"/>
    </location>
    <ligand>
        <name>D-ribose 5-phosphate</name>
        <dbReference type="ChEBI" id="CHEBI:78346"/>
    </ligand>
</feature>
<feature type="binding site" evidence="1">
    <location>
        <begin position="234"/>
        <end position="235"/>
    </location>
    <ligand>
        <name>D-ribose 5-phosphate</name>
        <dbReference type="ChEBI" id="CHEBI:78346"/>
    </ligand>
</feature>
<reference key="1">
    <citation type="submission" date="2007-05" db="EMBL/GenBank/DDBJ databases">
        <title>Complete sequence of Dehalococcoides sp. BAV1.</title>
        <authorList>
            <consortium name="US DOE Joint Genome Institute"/>
            <person name="Copeland A."/>
            <person name="Lucas S."/>
            <person name="Lapidus A."/>
            <person name="Barry K."/>
            <person name="Detter J.C."/>
            <person name="Glavina del Rio T."/>
            <person name="Hammon N."/>
            <person name="Israni S."/>
            <person name="Pitluck S."/>
            <person name="Lowry S."/>
            <person name="Clum A."/>
            <person name="Schmutz J."/>
            <person name="Larimer F."/>
            <person name="Land M."/>
            <person name="Hauser L."/>
            <person name="Kyrpides N."/>
            <person name="Kim E."/>
            <person name="Ritalahti K.M."/>
            <person name="Loeffler F."/>
            <person name="Richardson P."/>
        </authorList>
    </citation>
    <scope>NUCLEOTIDE SEQUENCE [LARGE SCALE GENOMIC DNA]</scope>
    <source>
        <strain>ATCC BAA-2100 / JCM 16839 / KCTC 5957 / BAV1</strain>
    </source>
</reference>
<keyword id="KW-0456">Lyase</keyword>
<keyword id="KW-0663">Pyridoxal phosphate</keyword>
<keyword id="KW-0704">Schiff base</keyword>
<protein>
    <recommendedName>
        <fullName evidence="1">Pyridoxal 5'-phosphate synthase subunit PdxS</fullName>
        <shortName evidence="1">PLP synthase subunit PdxS</shortName>
        <ecNumber evidence="1">4.3.3.6</ecNumber>
    </recommendedName>
    <alternativeName>
        <fullName evidence="1">Pdx1</fullName>
    </alternativeName>
</protein>
<sequence>METGTFKVKSGLAQMLKGGVIMDVTTPEQAKIAEEAGACAVMALERVPSDIRAAGGVARMADPTIIEQIMKVVSIPVMAKCRIGHFVEAQILESMGVDYIDESEVLTPADENFHVWKHDFKVPFVCGCRDLGEALRRIGEGAAMIRTKGEAGTGNIVEAVRHMRSVMGSVRRVQSMSPDELSAYAKEINAPLELVLELHKTGKLPVVNFAAGGVATPADAALMMQLGADGVFVGSGIFKSSNPSAMAKAVVKAVTHYKDAQILAEISKGLGDAMPGLDIKQIDPDKLISQRGW</sequence>
<organism>
    <name type="scientific">Dehalococcoides mccartyi (strain ATCC BAA-2100 / JCM 16839 / KCTC 5957 / BAV1)</name>
    <dbReference type="NCBI Taxonomy" id="216389"/>
    <lineage>
        <taxon>Bacteria</taxon>
        <taxon>Bacillati</taxon>
        <taxon>Chloroflexota</taxon>
        <taxon>Dehalococcoidia</taxon>
        <taxon>Dehalococcoidales</taxon>
        <taxon>Dehalococcoidaceae</taxon>
        <taxon>Dehalococcoides</taxon>
    </lineage>
</organism>
<gene>
    <name evidence="1" type="primary">pdxS</name>
    <name type="ordered locus">DehaBAV1_0362</name>
</gene>